<comment type="function">
    <text>Involved in oxygen transport from the lung to the various peripheral tissues.</text>
</comment>
<comment type="subunit">
    <text>Heterotetramer of two alpha chains and two beta chains.</text>
</comment>
<comment type="tissue specificity">
    <text>Red blood cells.</text>
</comment>
<comment type="polymorphism">
    <text evidence="2">There are two alleles. The sequence shown is that of beta.</text>
</comment>
<comment type="similarity">
    <text evidence="1">Belongs to the globin family.</text>
</comment>
<dbReference type="PIR" id="S00815">
    <property type="entry name" value="HBGLB"/>
</dbReference>
<dbReference type="SMR" id="P08261"/>
<dbReference type="GO" id="GO:0072562">
    <property type="term" value="C:blood microparticle"/>
    <property type="evidence" value="ECO:0007669"/>
    <property type="project" value="TreeGrafter"/>
</dbReference>
<dbReference type="GO" id="GO:0031838">
    <property type="term" value="C:haptoglobin-hemoglobin complex"/>
    <property type="evidence" value="ECO:0007669"/>
    <property type="project" value="TreeGrafter"/>
</dbReference>
<dbReference type="GO" id="GO:0005833">
    <property type="term" value="C:hemoglobin complex"/>
    <property type="evidence" value="ECO:0007669"/>
    <property type="project" value="InterPro"/>
</dbReference>
<dbReference type="GO" id="GO:0031720">
    <property type="term" value="F:haptoglobin binding"/>
    <property type="evidence" value="ECO:0007669"/>
    <property type="project" value="TreeGrafter"/>
</dbReference>
<dbReference type="GO" id="GO:0020037">
    <property type="term" value="F:heme binding"/>
    <property type="evidence" value="ECO:0007669"/>
    <property type="project" value="InterPro"/>
</dbReference>
<dbReference type="GO" id="GO:0046872">
    <property type="term" value="F:metal ion binding"/>
    <property type="evidence" value="ECO:0007669"/>
    <property type="project" value="UniProtKB-KW"/>
</dbReference>
<dbReference type="GO" id="GO:0043177">
    <property type="term" value="F:organic acid binding"/>
    <property type="evidence" value="ECO:0007669"/>
    <property type="project" value="TreeGrafter"/>
</dbReference>
<dbReference type="GO" id="GO:0019825">
    <property type="term" value="F:oxygen binding"/>
    <property type="evidence" value="ECO:0007669"/>
    <property type="project" value="InterPro"/>
</dbReference>
<dbReference type="GO" id="GO:0005344">
    <property type="term" value="F:oxygen carrier activity"/>
    <property type="evidence" value="ECO:0007669"/>
    <property type="project" value="UniProtKB-KW"/>
</dbReference>
<dbReference type="GO" id="GO:0004601">
    <property type="term" value="F:peroxidase activity"/>
    <property type="evidence" value="ECO:0007669"/>
    <property type="project" value="TreeGrafter"/>
</dbReference>
<dbReference type="GO" id="GO:0042744">
    <property type="term" value="P:hydrogen peroxide catabolic process"/>
    <property type="evidence" value="ECO:0007669"/>
    <property type="project" value="TreeGrafter"/>
</dbReference>
<dbReference type="CDD" id="cd08925">
    <property type="entry name" value="Hb-beta-like"/>
    <property type="match status" value="1"/>
</dbReference>
<dbReference type="FunFam" id="1.10.490.10:FF:000001">
    <property type="entry name" value="Hemoglobin subunit beta"/>
    <property type="match status" value="1"/>
</dbReference>
<dbReference type="Gene3D" id="1.10.490.10">
    <property type="entry name" value="Globins"/>
    <property type="match status" value="1"/>
</dbReference>
<dbReference type="InterPro" id="IPR000971">
    <property type="entry name" value="Globin"/>
</dbReference>
<dbReference type="InterPro" id="IPR009050">
    <property type="entry name" value="Globin-like_sf"/>
</dbReference>
<dbReference type="InterPro" id="IPR012292">
    <property type="entry name" value="Globin/Proto"/>
</dbReference>
<dbReference type="InterPro" id="IPR002337">
    <property type="entry name" value="Hemoglobin_b"/>
</dbReference>
<dbReference type="InterPro" id="IPR050056">
    <property type="entry name" value="Hemoglobin_oxygen_transport"/>
</dbReference>
<dbReference type="PANTHER" id="PTHR11442">
    <property type="entry name" value="HEMOGLOBIN FAMILY MEMBER"/>
    <property type="match status" value="1"/>
</dbReference>
<dbReference type="PANTHER" id="PTHR11442:SF7">
    <property type="entry name" value="HEMOGLOBIN SUBUNIT EPSILON"/>
    <property type="match status" value="1"/>
</dbReference>
<dbReference type="Pfam" id="PF00042">
    <property type="entry name" value="Globin"/>
    <property type="match status" value="1"/>
</dbReference>
<dbReference type="PRINTS" id="PR00814">
    <property type="entry name" value="BETAHAEM"/>
</dbReference>
<dbReference type="SUPFAM" id="SSF46458">
    <property type="entry name" value="Globin-like"/>
    <property type="match status" value="1"/>
</dbReference>
<dbReference type="PROSITE" id="PS01033">
    <property type="entry name" value="GLOBIN"/>
    <property type="match status" value="1"/>
</dbReference>
<evidence type="ECO:0000255" key="1">
    <source>
        <dbReference type="PROSITE-ProRule" id="PRU00238"/>
    </source>
</evidence>
<evidence type="ECO:0000269" key="2">
    <source>
    </source>
</evidence>
<accession>P08261</accession>
<name>HBB_CHRRI</name>
<proteinExistence type="evidence at protein level"/>
<gene>
    <name type="primary">HBB</name>
</gene>
<feature type="chain" id="PRO_0000052984" description="Hemoglobin subunit beta/beta'">
    <location>
        <begin position="1"/>
        <end position="146"/>
    </location>
</feature>
<feature type="domain" description="Globin" evidence="1">
    <location>
        <begin position="2"/>
        <end position="146"/>
    </location>
</feature>
<feature type="binding site" description="distal binding residue">
    <location>
        <position position="63"/>
    </location>
    <ligand>
        <name>heme b</name>
        <dbReference type="ChEBI" id="CHEBI:60344"/>
    </ligand>
    <ligandPart>
        <name>Fe</name>
        <dbReference type="ChEBI" id="CHEBI:18248"/>
    </ligandPart>
</feature>
<feature type="binding site" description="proximal binding residue">
    <location>
        <position position="92"/>
    </location>
    <ligand>
        <name>heme b</name>
        <dbReference type="ChEBI" id="CHEBI:60344"/>
    </ligand>
    <ligandPart>
        <name>Fe</name>
        <dbReference type="ChEBI" id="CHEBI:18248"/>
    </ligandPart>
</feature>
<feature type="sequence variant" description="In beta'." evidence="2">
    <original>L</original>
    <variation>I</variation>
    <location>
        <position position="78"/>
    </location>
</feature>
<sequence>VHWSAEEKQLITGLWGKVNVADCGAEALARLLIVYPWTQRFFASFGNLSSPTAINGNPMVRAHGKKVLTSFGEAVKNLDNIKNTFAQLSELHCDKLHVDPENFRLLGDILIIVLAAHFAKDFTPDSQAAWQKLVRVVAHALARKYH</sequence>
<reference key="1">
    <citation type="journal article" date="1988" name="Biol. Chem. Hoppe-Seyler">
        <title>Structural adaptation of bird hemoglobins to high-altitude respiration and the primary sequences of black-headed gull (Larus ridibundus, Charadriiformes) alpha A- and beta/beta'-chains.</title>
        <authorList>
            <person name="Godovac-Zimmermann J."/>
            <person name="Kosters J."/>
            <person name="Braunitzer G."/>
            <person name="Goltenboth R."/>
        </authorList>
    </citation>
    <scope>PROTEIN SEQUENCE</scope>
</reference>
<keyword id="KW-0903">Direct protein sequencing</keyword>
<keyword id="KW-0349">Heme</keyword>
<keyword id="KW-0408">Iron</keyword>
<keyword id="KW-0479">Metal-binding</keyword>
<keyword id="KW-0561">Oxygen transport</keyword>
<keyword id="KW-0813">Transport</keyword>
<organism>
    <name type="scientific">Chroicocephalus ridibundus</name>
    <name type="common">Black-headed gull</name>
    <name type="synonym">Larus ridibundus</name>
    <dbReference type="NCBI Taxonomy" id="1192867"/>
    <lineage>
        <taxon>Eukaryota</taxon>
        <taxon>Metazoa</taxon>
        <taxon>Chordata</taxon>
        <taxon>Craniata</taxon>
        <taxon>Vertebrata</taxon>
        <taxon>Euteleostomi</taxon>
        <taxon>Archelosauria</taxon>
        <taxon>Archosauria</taxon>
        <taxon>Dinosauria</taxon>
        <taxon>Saurischia</taxon>
        <taxon>Theropoda</taxon>
        <taxon>Coelurosauria</taxon>
        <taxon>Aves</taxon>
        <taxon>Neognathae</taxon>
        <taxon>Neoaves</taxon>
        <taxon>Charadriiformes</taxon>
        <taxon>Laridae</taxon>
        <taxon>Chroicocephalus</taxon>
    </lineage>
</organism>
<protein>
    <recommendedName>
        <fullName>Hemoglobin subunit beta/beta'</fullName>
    </recommendedName>
    <alternativeName>
        <fullName>Beta/beta'-globin</fullName>
    </alternativeName>
    <alternativeName>
        <fullName>Hemoglobin beta/beta' chain</fullName>
    </alternativeName>
</protein>